<protein>
    <recommendedName>
        <fullName evidence="4">Extended FMRFamide-4</fullName>
        <shortName evidence="4">FMRFa-4</shortName>
    </recommendedName>
</protein>
<evidence type="ECO:0000250" key="1">
    <source>
        <dbReference type="UniProtKB" id="P34405"/>
    </source>
</evidence>
<evidence type="ECO:0000255" key="2"/>
<evidence type="ECO:0000269" key="3">
    <source>
    </source>
</evidence>
<evidence type="ECO:0000303" key="4">
    <source>
    </source>
</evidence>
<evidence type="ECO:0000305" key="5"/>
<evidence type="ECO:0000305" key="6">
    <source>
    </source>
</evidence>
<feature type="peptide" id="PRO_0000420741" description="Extended FMRFamide-4" evidence="3">
    <location>
        <begin position="1"/>
        <end position="9"/>
    </location>
</feature>
<feature type="modified residue" description="Leucine amide" evidence="3">
    <location>
        <position position="9"/>
    </location>
</feature>
<feature type="unsure residue" description="L or I" evidence="3">
    <location>
        <position position="7"/>
    </location>
</feature>
<feature type="unsure residue" description="L or I" evidence="3">
    <location>
        <position position="9"/>
    </location>
</feature>
<dbReference type="GO" id="GO:0005576">
    <property type="term" value="C:extracellular region"/>
    <property type="evidence" value="ECO:0007669"/>
    <property type="project" value="UniProtKB-SubCell"/>
</dbReference>
<dbReference type="GO" id="GO:0007218">
    <property type="term" value="P:neuropeptide signaling pathway"/>
    <property type="evidence" value="ECO:0007669"/>
    <property type="project" value="UniProtKB-KW"/>
</dbReference>
<keyword id="KW-0027">Amidation</keyword>
<keyword id="KW-0903">Direct protein sequencing</keyword>
<keyword id="KW-0527">Neuropeptide</keyword>
<keyword id="KW-0964">Secreted</keyword>
<reference evidence="5" key="1">
    <citation type="journal article" date="2012" name="Syst. Biol.">
        <title>Peptidomics-based phylogeny and biogeography of Mantophasmatodea (Hexapoda).</title>
        <authorList>
            <person name="Predel R."/>
            <person name="Neupert S."/>
            <person name="Huetteroth W."/>
            <person name="Kahnt J."/>
            <person name="Waidelich D."/>
            <person name="Roth S."/>
        </authorList>
    </citation>
    <scope>PROTEIN SEQUENCE</scope>
    <scope>AMIDATION AT LEU-9</scope>
    <source>
        <tissue evidence="3">Thoracic perisympathetic organs</tissue>
    </source>
</reference>
<proteinExistence type="evidence at protein level"/>
<organism>
    <name type="scientific">Striatophasma naukluftense</name>
    <name type="common">Gladiator</name>
    <name type="synonym">Heel-walker</name>
    <dbReference type="NCBI Taxonomy" id="1041429"/>
    <lineage>
        <taxon>Eukaryota</taxon>
        <taxon>Metazoa</taxon>
        <taxon>Ecdysozoa</taxon>
        <taxon>Arthropoda</taxon>
        <taxon>Hexapoda</taxon>
        <taxon>Insecta</taxon>
        <taxon>Pterygota</taxon>
        <taxon>Neoptera</taxon>
        <taxon>Polyneoptera</taxon>
        <taxon>Mantophasmatodea</taxon>
        <taxon>Austrophasmatidae</taxon>
        <taxon>Striatophasma</taxon>
    </lineage>
</organism>
<name>FAR4_STRNA</name>
<comment type="function">
    <text evidence="1">FMRFamides and FMRFamide-like peptides are neuropeptides.</text>
</comment>
<comment type="subcellular location">
    <subcellularLocation>
        <location evidence="6">Secreted</location>
    </subcellularLocation>
</comment>
<comment type="similarity">
    <text evidence="2">Belongs to the FARP (FMRF amide related peptide) family.</text>
</comment>
<accession>B0M3A7</accession>
<sequence>GVDSSFLRL</sequence>